<proteinExistence type="inferred from homology"/>
<dbReference type="EMBL" id="BA000035">
    <property type="protein sequence ID" value="BAC18770.1"/>
    <property type="molecule type" value="Genomic_DNA"/>
</dbReference>
<dbReference type="RefSeq" id="WP_006767956.1">
    <property type="nucleotide sequence ID" value="NC_004369.1"/>
</dbReference>
<dbReference type="SMR" id="Q8FP30"/>
<dbReference type="STRING" id="196164.gene:10742388"/>
<dbReference type="KEGG" id="cef:CE1960"/>
<dbReference type="eggNOG" id="COG0228">
    <property type="taxonomic scope" value="Bacteria"/>
</dbReference>
<dbReference type="HOGENOM" id="CLU_100590_1_1_11"/>
<dbReference type="OrthoDB" id="9807878at2"/>
<dbReference type="Proteomes" id="UP000001409">
    <property type="component" value="Chromosome"/>
</dbReference>
<dbReference type="GO" id="GO:0005737">
    <property type="term" value="C:cytoplasm"/>
    <property type="evidence" value="ECO:0007669"/>
    <property type="project" value="UniProtKB-ARBA"/>
</dbReference>
<dbReference type="GO" id="GO:0015935">
    <property type="term" value="C:small ribosomal subunit"/>
    <property type="evidence" value="ECO:0007669"/>
    <property type="project" value="TreeGrafter"/>
</dbReference>
<dbReference type="GO" id="GO:0003735">
    <property type="term" value="F:structural constituent of ribosome"/>
    <property type="evidence" value="ECO:0007669"/>
    <property type="project" value="InterPro"/>
</dbReference>
<dbReference type="GO" id="GO:0006412">
    <property type="term" value="P:translation"/>
    <property type="evidence" value="ECO:0007669"/>
    <property type="project" value="UniProtKB-UniRule"/>
</dbReference>
<dbReference type="Gene3D" id="3.30.1320.10">
    <property type="match status" value="1"/>
</dbReference>
<dbReference type="HAMAP" id="MF_00385">
    <property type="entry name" value="Ribosomal_bS16"/>
    <property type="match status" value="1"/>
</dbReference>
<dbReference type="InterPro" id="IPR000307">
    <property type="entry name" value="Ribosomal_bS16"/>
</dbReference>
<dbReference type="InterPro" id="IPR023803">
    <property type="entry name" value="Ribosomal_bS16_dom_sf"/>
</dbReference>
<dbReference type="NCBIfam" id="NF011093">
    <property type="entry name" value="PRK14520.1"/>
    <property type="match status" value="1"/>
</dbReference>
<dbReference type="NCBIfam" id="TIGR00002">
    <property type="entry name" value="S16"/>
    <property type="match status" value="1"/>
</dbReference>
<dbReference type="PANTHER" id="PTHR12919">
    <property type="entry name" value="30S RIBOSOMAL PROTEIN S16"/>
    <property type="match status" value="1"/>
</dbReference>
<dbReference type="PANTHER" id="PTHR12919:SF20">
    <property type="entry name" value="SMALL RIBOSOMAL SUBUNIT PROTEIN BS16M"/>
    <property type="match status" value="1"/>
</dbReference>
<dbReference type="Pfam" id="PF00886">
    <property type="entry name" value="Ribosomal_S16"/>
    <property type="match status" value="1"/>
</dbReference>
<dbReference type="SUPFAM" id="SSF54565">
    <property type="entry name" value="Ribosomal protein S16"/>
    <property type="match status" value="1"/>
</dbReference>
<name>RS16_COREF</name>
<gene>
    <name evidence="1" type="primary">rpsP</name>
    <name type="ordered locus">CE1960</name>
</gene>
<sequence>MAVKIKLQRLGKIRTPHYRVVVADARTKRDGKVIENIGIYEPKQDPSVIKIDSERAQYWLSVGAQPTESVAALLKVTGDWQKFKGIEGAEGTLRVAEEKPSKLDLFNQALSEANNGPTAEAITEKKKKAREEKEAKEAAEKAAAEKAAAAEAEASEEAPAEEAASEEA</sequence>
<comment type="similarity">
    <text evidence="1">Belongs to the bacterial ribosomal protein bS16 family.</text>
</comment>
<protein>
    <recommendedName>
        <fullName evidence="1">Small ribosomal subunit protein bS16</fullName>
    </recommendedName>
    <alternativeName>
        <fullName evidence="3">30S ribosomal protein S16</fullName>
    </alternativeName>
</protein>
<evidence type="ECO:0000255" key="1">
    <source>
        <dbReference type="HAMAP-Rule" id="MF_00385"/>
    </source>
</evidence>
<evidence type="ECO:0000256" key="2">
    <source>
        <dbReference type="SAM" id="MobiDB-lite"/>
    </source>
</evidence>
<evidence type="ECO:0000305" key="3"/>
<feature type="chain" id="PRO_0000167179" description="Small ribosomal subunit protein bS16">
    <location>
        <begin position="1"/>
        <end position="168"/>
    </location>
</feature>
<feature type="region of interest" description="Disordered" evidence="2">
    <location>
        <begin position="110"/>
        <end position="168"/>
    </location>
</feature>
<feature type="compositionally biased region" description="Basic and acidic residues" evidence="2">
    <location>
        <begin position="129"/>
        <end position="144"/>
    </location>
</feature>
<feature type="compositionally biased region" description="Acidic residues" evidence="2">
    <location>
        <begin position="153"/>
        <end position="168"/>
    </location>
</feature>
<accession>Q8FP30</accession>
<keyword id="KW-1185">Reference proteome</keyword>
<keyword id="KW-0687">Ribonucleoprotein</keyword>
<keyword id="KW-0689">Ribosomal protein</keyword>
<reference key="1">
    <citation type="journal article" date="2003" name="Genome Res.">
        <title>Comparative complete genome sequence analysis of the amino acid replacements responsible for the thermostability of Corynebacterium efficiens.</title>
        <authorList>
            <person name="Nishio Y."/>
            <person name="Nakamura Y."/>
            <person name="Kawarabayasi Y."/>
            <person name="Usuda Y."/>
            <person name="Kimura E."/>
            <person name="Sugimoto S."/>
            <person name="Matsui K."/>
            <person name="Yamagishi A."/>
            <person name="Kikuchi H."/>
            <person name="Ikeo K."/>
            <person name="Gojobori T."/>
        </authorList>
    </citation>
    <scope>NUCLEOTIDE SEQUENCE [LARGE SCALE GENOMIC DNA]</scope>
    <source>
        <strain>DSM 44549 / YS-314 / AJ 12310 / JCM 11189 / NBRC 100395</strain>
    </source>
</reference>
<organism>
    <name type="scientific">Corynebacterium efficiens (strain DSM 44549 / YS-314 / AJ 12310 / JCM 11189 / NBRC 100395)</name>
    <dbReference type="NCBI Taxonomy" id="196164"/>
    <lineage>
        <taxon>Bacteria</taxon>
        <taxon>Bacillati</taxon>
        <taxon>Actinomycetota</taxon>
        <taxon>Actinomycetes</taxon>
        <taxon>Mycobacteriales</taxon>
        <taxon>Corynebacteriaceae</taxon>
        <taxon>Corynebacterium</taxon>
    </lineage>
</organism>